<sequence>MADQENSPLHTVGFDARFPQQNQTKHCWQSYVDYHKCVNMKGEDFAPCKVFWKTYNALCPLDWIEKWDDQREKGIFAGDINSD</sequence>
<reference key="1">
    <citation type="journal article" date="1992" name="J. Biol. Chem.">
        <title>Isolation and characterization of COX12, the nuclear gene for a previously unrecognized subunit of Saccharomyces cerevisiae cytochrome c oxidase.</title>
        <authorList>
            <person name="Lamarche A.E."/>
            <person name="Abate M.I."/>
            <person name="Chan S.H."/>
            <person name="Trumpower B.L."/>
        </authorList>
    </citation>
    <scope>NUCLEOTIDE SEQUENCE [GENOMIC DNA]</scope>
    <scope>PROTEIN SEQUENCE OF 2-8; 11-13 AND 14</scope>
    <source>
        <strain>ATCC 204508 / S288c</strain>
    </source>
</reference>
<reference key="2">
    <citation type="journal article" date="1997" name="Nature">
        <title>The nucleotide sequence of Saccharomyces cerevisiae chromosome XII.</title>
        <authorList>
            <person name="Johnston M."/>
            <person name="Hillier L.W."/>
            <person name="Riles L."/>
            <person name="Albermann K."/>
            <person name="Andre B."/>
            <person name="Ansorge W."/>
            <person name="Benes V."/>
            <person name="Brueckner M."/>
            <person name="Delius H."/>
            <person name="Dubois E."/>
            <person name="Duesterhoeft A."/>
            <person name="Entian K.-D."/>
            <person name="Floeth M."/>
            <person name="Goffeau A."/>
            <person name="Hebling U."/>
            <person name="Heumann K."/>
            <person name="Heuss-Neitzel D."/>
            <person name="Hilbert H."/>
            <person name="Hilger F."/>
            <person name="Kleine K."/>
            <person name="Koetter P."/>
            <person name="Louis E.J."/>
            <person name="Messenguy F."/>
            <person name="Mewes H.-W."/>
            <person name="Miosga T."/>
            <person name="Moestl D."/>
            <person name="Mueller-Auer S."/>
            <person name="Nentwich U."/>
            <person name="Obermaier B."/>
            <person name="Piravandi E."/>
            <person name="Pohl T.M."/>
            <person name="Portetelle D."/>
            <person name="Purnelle B."/>
            <person name="Rechmann S."/>
            <person name="Rieger M."/>
            <person name="Rinke M."/>
            <person name="Rose M."/>
            <person name="Scharfe M."/>
            <person name="Scherens B."/>
            <person name="Scholler P."/>
            <person name="Schwager C."/>
            <person name="Schwarz S."/>
            <person name="Underwood A.P."/>
            <person name="Urrestarazu L.A."/>
            <person name="Vandenbol M."/>
            <person name="Verhasselt P."/>
            <person name="Vierendeels F."/>
            <person name="Voet M."/>
            <person name="Volckaert G."/>
            <person name="Voss H."/>
            <person name="Wambutt R."/>
            <person name="Wedler E."/>
            <person name="Wedler H."/>
            <person name="Zimmermann F.K."/>
            <person name="Zollner A."/>
            <person name="Hani J."/>
            <person name="Hoheisel J.D."/>
        </authorList>
    </citation>
    <scope>NUCLEOTIDE SEQUENCE [LARGE SCALE GENOMIC DNA]</scope>
    <source>
        <strain>ATCC 204508 / S288c</strain>
    </source>
</reference>
<reference key="3">
    <citation type="journal article" date="2014" name="G3 (Bethesda)">
        <title>The reference genome sequence of Saccharomyces cerevisiae: Then and now.</title>
        <authorList>
            <person name="Engel S.R."/>
            <person name="Dietrich F.S."/>
            <person name="Fisk D.G."/>
            <person name="Binkley G."/>
            <person name="Balakrishnan R."/>
            <person name="Costanzo M.C."/>
            <person name="Dwight S.S."/>
            <person name="Hitz B.C."/>
            <person name="Karra K."/>
            <person name="Nash R.S."/>
            <person name="Weng S."/>
            <person name="Wong E.D."/>
            <person name="Lloyd P."/>
            <person name="Skrzypek M.S."/>
            <person name="Miyasato S.R."/>
            <person name="Simison M."/>
            <person name="Cherry J.M."/>
        </authorList>
    </citation>
    <scope>GENOME REANNOTATION</scope>
    <source>
        <strain>ATCC 204508 / S288c</strain>
    </source>
</reference>
<reference key="4">
    <citation type="journal article" date="2007" name="Genome Res.">
        <title>Approaching a complete repository of sequence-verified protein-encoding clones for Saccharomyces cerevisiae.</title>
        <authorList>
            <person name="Hu Y."/>
            <person name="Rolfs A."/>
            <person name="Bhullar B."/>
            <person name="Murthy T.V.S."/>
            <person name="Zhu C."/>
            <person name="Berger M.F."/>
            <person name="Camargo A.A."/>
            <person name="Kelley F."/>
            <person name="McCarron S."/>
            <person name="Jepson D."/>
            <person name="Richardson A."/>
            <person name="Raphael J."/>
            <person name="Moreira D."/>
            <person name="Taycher E."/>
            <person name="Zuo D."/>
            <person name="Mohr S."/>
            <person name="Kane M.F."/>
            <person name="Williamson J."/>
            <person name="Simpson A.J.G."/>
            <person name="Bulyk M.L."/>
            <person name="Harlow E."/>
            <person name="Marsischky G."/>
            <person name="Kolodner R.D."/>
            <person name="LaBaer J."/>
        </authorList>
    </citation>
    <scope>NUCLEOTIDE SEQUENCE [GENOMIC DNA]</scope>
    <source>
        <strain>ATCC 204508 / S288c</strain>
    </source>
</reference>
<reference key="5">
    <citation type="journal article" date="1992" name="J. Biol. Chem.">
        <title>Purification of yeast cytochrome c oxidase with a subunit composition resembling the mammalian enzyme.</title>
        <authorList>
            <person name="Taanman J.-W."/>
            <person name="Capaldi R.A."/>
        </authorList>
    </citation>
    <scope>PROTEIN SEQUENCE OF 2-20</scope>
    <scope>COMPOSITION OF THE CYTOCHROME C OXIDASE COMPLEX</scope>
</reference>
<reference key="6">
    <citation type="journal article" date="1995" name="Eur. J. Biochem.">
        <title>Kinetic properties and ligand binding of the eleven-subunit cytochrome-c oxidase from Saccharomyces cerevisiae isolated with a novel large-scale purification method.</title>
        <authorList>
            <person name="Geier B.M."/>
            <person name="Schagger H."/>
            <person name="Ortwein C."/>
            <person name="Link T.A."/>
            <person name="Hagen W.R."/>
            <person name="Brandt U."/>
            <person name="Von Jagow G."/>
        </authorList>
    </citation>
    <scope>PROTEIN SEQUENCE OF 2-4</scope>
    <scope>COMPOSITION OF THE CYTOCHROME C OXIDASE COMPLEX</scope>
</reference>
<reference key="7">
    <citation type="journal article" date="2000" name="EMBO J.">
        <title>Supercomplexes in the respiratory chains of yeast and mammalian mitochondria.</title>
        <authorList>
            <person name="Schaegger H."/>
            <person name="Pfeiffer K."/>
        </authorList>
    </citation>
    <scope>FORMATION OF CYTOCHROME BC1-CYTOCHROME C OXIDASE SUPERCOMPLEX</scope>
</reference>
<reference key="8">
    <citation type="journal article" date="2000" name="J. Biol. Chem.">
        <title>The cytochrome bc1 and cytochrome c oxidase complexes associate to form a single supracomplex in yeast mitochondria.</title>
        <authorList>
            <person name="Cruciat C.M."/>
            <person name="Brunner S."/>
            <person name="Baumann F."/>
            <person name="Neupert W."/>
            <person name="Stuart R.A."/>
        </authorList>
    </citation>
    <scope>FORMATION OF CYTOCHROME BC1-CYTOCHROME C OXIDASE SUPERCOMPLEX</scope>
</reference>
<reference key="9">
    <citation type="journal article" date="2003" name="Nature">
        <title>Global analysis of protein expression in yeast.</title>
        <authorList>
            <person name="Ghaemmaghami S."/>
            <person name="Huh W.-K."/>
            <person name="Bower K."/>
            <person name="Howson R.W."/>
            <person name="Belle A."/>
            <person name="Dephoure N."/>
            <person name="O'Shea E.K."/>
            <person name="Weissman J.S."/>
        </authorList>
    </citation>
    <scope>LEVEL OF PROTEIN EXPRESSION [LARGE SCALE ANALYSIS]</scope>
</reference>
<reference key="10">
    <citation type="journal article" date="2007" name="Mol. Cell. Proteomics">
        <title>Profiling phosphoproteins of yeast mitochondria reveals a role of phosphorylation in assembly of the ATP synthase.</title>
        <authorList>
            <person name="Reinders J."/>
            <person name="Wagner K."/>
            <person name="Zahedi R.P."/>
            <person name="Stojanovski D."/>
            <person name="Eyrich B."/>
            <person name="van der Laan M."/>
            <person name="Rehling P."/>
            <person name="Sickmann A."/>
            <person name="Pfanner N."/>
            <person name="Meisinger C."/>
        </authorList>
    </citation>
    <scope>PHOSPHORYLATION [LARGE SCALE ANALYSIS] AT SER-82</scope>
    <scope>IDENTIFICATION BY MASS SPECTROMETRY [LARGE SCALE ANALYSIS]</scope>
    <source>
        <strain>ATCC 76625 / YPH499</strain>
    </source>
</reference>
<reference key="11">
    <citation type="journal article" date="2012" name="Mol. Cell. Proteomics">
        <title>Intermembrane space proteome of yeast mitochondria.</title>
        <authorList>
            <person name="Voegtle F.N."/>
            <person name="Burkhart J.M."/>
            <person name="Rao S."/>
            <person name="Gerbeth C."/>
            <person name="Hinrichs J."/>
            <person name="Martinou J.C."/>
            <person name="Chacinska A."/>
            <person name="Sickmann A."/>
            <person name="Zahedi R.P."/>
            <person name="Meisinger C."/>
        </authorList>
    </citation>
    <scope>IDENTIFICATION BY MASS SPECTROMETRY</scope>
    <scope>SUBCELLULAR LOCATION [LARGE SCALE ANALYSIS]</scope>
</reference>
<reference key="12">
    <citation type="journal article" date="2012" name="Proc. Natl. Acad. Sci. U.S.A.">
        <title>N-terminal acetylome analyses and functional insights of the N-terminal acetyltransferase NatB.</title>
        <authorList>
            <person name="Van Damme P."/>
            <person name="Lasa M."/>
            <person name="Polevoda B."/>
            <person name="Gazquez C."/>
            <person name="Elosegui-Artola A."/>
            <person name="Kim D.S."/>
            <person name="De Juan-Pardo E."/>
            <person name="Demeyer K."/>
            <person name="Hole K."/>
            <person name="Larrea E."/>
            <person name="Timmerman E."/>
            <person name="Prieto J."/>
            <person name="Arnesen T."/>
            <person name="Sherman F."/>
            <person name="Gevaert K."/>
            <person name="Aldabe R."/>
        </authorList>
    </citation>
    <scope>IDENTIFICATION BY MASS SPECTROMETRY [LARGE SCALE ANALYSIS]</scope>
</reference>
<reference key="13">
    <citation type="journal article" date="2019" name="Nat. Struct. Mol. Biol.">
        <title>Cryo-EM structure of the yeast respiratory supercomplex.</title>
        <authorList>
            <person name="Rathore S."/>
            <person name="Berndtsson J."/>
            <person name="Marin-Buera L."/>
            <person name="Conrad J."/>
            <person name="Carroni M."/>
            <person name="Brzezinski P."/>
            <person name="Ott M."/>
        </authorList>
    </citation>
    <scope>STRUCTURE BY ELECTRON MICROSCOPY (3.23 ANGSTROMS)</scope>
</reference>
<reference key="14">
    <citation type="journal article" date="2019" name="Nat. Struct. Mol. Biol.">
        <title>Structure of yeast cytochrome c oxidase in a supercomplex with cytochrome bc1.</title>
        <authorList>
            <person name="Hartley A.M."/>
            <person name="Lukoyanova N."/>
            <person name="Zhang Y."/>
            <person name="Cabrera-Orefice A."/>
            <person name="Arnold S."/>
            <person name="Meunier B."/>
            <person name="Pinotsis N."/>
            <person name="Marechal A."/>
        </authorList>
    </citation>
    <scope>STRUCTURE BY ELECTRON MICROSCOPY (3.35 ANGSTROMS)</scope>
    <scope>FUNCTION</scope>
</reference>
<accession>Q01519</accession>
<accession>D6VY41</accession>
<accession>Q9URA6</accession>
<comment type="function">
    <text evidence="13">Component of the cytochrome c oxidase, the last enzyme in the mitochondrial electron transport chain which drives oxidative phosphorylation. The respiratory chain contains 3 multisubunit complexes succinate dehydrogenase (complex II, CII), ubiquinol-cytochrome c oxidoreductase (cytochrome b-c1 complex, complex III, CIII) and cytochrome c oxidase (complex IV, CIV), that cooperate to transfer electrons derived from NADH and succinate to molecular oxygen, creating an electrochemical gradient over the inner membrane that drives transmembrane transport and the ATP synthase. Cytochrome c oxidase is the component of the respiratory chain that catalyzes the reduction of oxygen to water. Electrons originating from reduced cytochrome c in the intermembrane space (IMS) are transferred via the dinuclear copper A center (CU(A)) of COX2 and heme A of COX1 to the active site in COX1, a binuclear center (BNC) formed by heme A3 and copper B (CU(B)). The BNC reduces molecular oxygen to 2 water molecules unsing 4 electrons from cytochrome c in the IMS and 4 protons from the mitochondrial matrix.</text>
</comment>
<comment type="pathway">
    <text>Energy metabolism; oxidative phosphorylation.</text>
</comment>
<comment type="subunit">
    <text evidence="3 4 9 10 11">Component of the cytochrome c oxidase (complex IV, CIV), a multisubunit enzyme composed of 12 subunits. The complex is composed of a catalytic core of 3 subunits COX1, COX2 and COX3, encoded in the mitochondrial DNA, and 9 supernumerary subunits COX4, COX5A (or COX5B), COX6, COX7, COX8, COX9, COX12, COX13 and COX26, which are encoded in the nuclear genome (PubMed:30598554, PubMed:30598556, PubMed:7851399). The complex exists as a monomer or a dimer and forms supercomplexes (SCs) in the inner mitochondrial membrane with a dimer of ubiquinol-cytochrome c oxidoreductase (cytochrome b-c1 complex, complex III, CIII), resulting in 2 different assemblies (supercomplexes III(2)IV and III(2)IV(2)) (PubMed:10764779, PubMed:10775262, PubMed:30598554, PubMed:30598556).</text>
</comment>
<comment type="subcellular location">
    <subcellularLocation>
        <location evidence="9">Mitochondrion inner membrane</location>
        <topology evidence="9">Peripheral membrane protein</topology>
        <orientation evidence="8 9">Intermembrane side</orientation>
    </subcellularLocation>
    <text>Imported into the mitochondria via the mitochondrial MIA40-ERV1 machinery.</text>
</comment>
<comment type="domain">
    <text evidence="1">The Cx9C/Cx10C motifs are involved in the recognition by the mitochondrial MIA40-ERV1 disulfide relay system and the subsequent transfer of disulfide bonds by dithiol/disulfide exchange reactions to the newly imported protein.</text>
</comment>
<comment type="miscellaneous">
    <text evidence="7">Present with 1390 molecules/cell in log phase SD medium.</text>
</comment>
<comment type="similarity">
    <text evidence="12">Belongs to the cytochrome c oxidase subunit 6B family.</text>
</comment>
<keyword id="KW-0002">3D-structure</keyword>
<keyword id="KW-0903">Direct protein sequencing</keyword>
<keyword id="KW-1015">Disulfide bond</keyword>
<keyword id="KW-0472">Membrane</keyword>
<keyword id="KW-0496">Mitochondrion</keyword>
<keyword id="KW-0999">Mitochondrion inner membrane</keyword>
<keyword id="KW-0560">Oxidoreductase</keyword>
<keyword id="KW-0597">Phosphoprotein</keyword>
<keyword id="KW-1185">Reference proteome</keyword>
<name>COX12_YEAST</name>
<feature type="initiator methionine" description="Removed" evidence="5 6 11">
    <location>
        <position position="1"/>
    </location>
</feature>
<feature type="chain" id="PRO_0000194925" description="Cytochrome c oxidase subunit 12, mitochondrial">
    <location>
        <begin position="2"/>
        <end position="83"/>
    </location>
</feature>
<feature type="domain" description="CHCH" evidence="2">
    <location>
        <begin position="24"/>
        <end position="67"/>
    </location>
</feature>
<feature type="short sequence motif" description="Cx9C motif" evidence="2">
    <location>
        <begin position="27"/>
        <end position="37"/>
    </location>
</feature>
<feature type="short sequence motif" description="Cx10C motif" evidence="2">
    <location>
        <begin position="48"/>
        <end position="59"/>
    </location>
</feature>
<feature type="modified residue" description="Phosphoserine" evidence="14">
    <location>
        <position position="82"/>
    </location>
</feature>
<feature type="disulfide bond" evidence="2">
    <location>
        <begin position="27"/>
        <end position="59"/>
    </location>
</feature>
<feature type="disulfide bond" evidence="2">
    <location>
        <begin position="37"/>
        <end position="48"/>
    </location>
</feature>
<feature type="strand" evidence="15">
    <location>
        <begin position="20"/>
        <end position="22"/>
    </location>
</feature>
<feature type="helix" evidence="16">
    <location>
        <begin position="24"/>
        <end position="37"/>
    </location>
</feature>
<feature type="turn" evidence="16">
    <location>
        <begin position="38"/>
        <end position="40"/>
    </location>
</feature>
<feature type="helix" evidence="16">
    <location>
        <begin position="46"/>
        <end position="48"/>
    </location>
</feature>
<feature type="helix" evidence="16">
    <location>
        <begin position="49"/>
        <end position="57"/>
    </location>
</feature>
<feature type="helix" evidence="16">
    <location>
        <begin position="61"/>
        <end position="72"/>
    </location>
</feature>
<proteinExistence type="evidence at protein level"/>
<protein>
    <recommendedName>
        <fullName>Cytochrome c oxidase subunit 12, mitochondrial</fullName>
    </recommendedName>
    <alternativeName>
        <fullName>Cytochrome c oxidase polypeptide VIb</fullName>
    </alternativeName>
</protein>
<evidence type="ECO:0000250" key="1"/>
<evidence type="ECO:0000255" key="2">
    <source>
        <dbReference type="PROSITE-ProRule" id="PRU01150"/>
    </source>
</evidence>
<evidence type="ECO:0000269" key="3">
    <source>
    </source>
</evidence>
<evidence type="ECO:0000269" key="4">
    <source>
    </source>
</evidence>
<evidence type="ECO:0000269" key="5">
    <source>
    </source>
</evidence>
<evidence type="ECO:0000269" key="6">
    <source>
    </source>
</evidence>
<evidence type="ECO:0000269" key="7">
    <source>
    </source>
</evidence>
<evidence type="ECO:0000269" key="8">
    <source>
    </source>
</evidence>
<evidence type="ECO:0000269" key="9">
    <source>
    </source>
</evidence>
<evidence type="ECO:0000269" key="10">
    <source>
    </source>
</evidence>
<evidence type="ECO:0000269" key="11">
    <source>
    </source>
</evidence>
<evidence type="ECO:0000305" key="12"/>
<evidence type="ECO:0000305" key="13">
    <source>
    </source>
</evidence>
<evidence type="ECO:0007744" key="14">
    <source>
    </source>
</evidence>
<evidence type="ECO:0007829" key="15">
    <source>
        <dbReference type="PDB" id="6T0B"/>
    </source>
</evidence>
<evidence type="ECO:0007829" key="16">
    <source>
        <dbReference type="PDB" id="9ETZ"/>
    </source>
</evidence>
<gene>
    <name type="primary">COX12</name>
    <name type="ordered locus">YLR038C</name>
</gene>
<organism>
    <name type="scientific">Saccharomyces cerevisiae (strain ATCC 204508 / S288c)</name>
    <name type="common">Baker's yeast</name>
    <dbReference type="NCBI Taxonomy" id="559292"/>
    <lineage>
        <taxon>Eukaryota</taxon>
        <taxon>Fungi</taxon>
        <taxon>Dikarya</taxon>
        <taxon>Ascomycota</taxon>
        <taxon>Saccharomycotina</taxon>
        <taxon>Saccharomycetes</taxon>
        <taxon>Saccharomycetales</taxon>
        <taxon>Saccharomycetaceae</taxon>
        <taxon>Saccharomyces</taxon>
    </lineage>
</organism>
<dbReference type="EMBL" id="M98332">
    <property type="protein sequence ID" value="AAA34510.1"/>
    <property type="molecule type" value="Genomic_DNA"/>
</dbReference>
<dbReference type="EMBL" id="Z73210">
    <property type="protein sequence ID" value="CAA97566.1"/>
    <property type="molecule type" value="Genomic_DNA"/>
</dbReference>
<dbReference type="EMBL" id="AY557925">
    <property type="protein sequence ID" value="AAS56251.1"/>
    <property type="molecule type" value="Genomic_DNA"/>
</dbReference>
<dbReference type="EMBL" id="BK006945">
    <property type="protein sequence ID" value="DAA09357.1"/>
    <property type="molecule type" value="Genomic_DNA"/>
</dbReference>
<dbReference type="PIR" id="S31256">
    <property type="entry name" value="S31256"/>
</dbReference>
<dbReference type="RefSeq" id="NP_013139.1">
    <property type="nucleotide sequence ID" value="NM_001181925.1"/>
</dbReference>
<dbReference type="PDB" id="6GIQ">
    <property type="method" value="EM"/>
    <property type="resolution" value="3.23 A"/>
    <property type="chains" value="j=1-83"/>
</dbReference>
<dbReference type="PDB" id="6HU9">
    <property type="method" value="EM"/>
    <property type="resolution" value="3.35 A"/>
    <property type="chains" value="j/v=2-83"/>
</dbReference>
<dbReference type="PDB" id="6T0B">
    <property type="method" value="EM"/>
    <property type="resolution" value="2.80 A"/>
    <property type="chains" value="j/w=2-83"/>
</dbReference>
<dbReference type="PDB" id="6T15">
    <property type="method" value="EM"/>
    <property type="resolution" value="3.29 A"/>
    <property type="chains" value="j=2-83"/>
</dbReference>
<dbReference type="PDB" id="6YMX">
    <property type="method" value="EM"/>
    <property type="resolution" value="3.17 A"/>
    <property type="chains" value="j=6-83"/>
</dbReference>
<dbReference type="PDB" id="6YMY">
    <property type="method" value="EM"/>
    <property type="resolution" value="3.41 A"/>
    <property type="chains" value="j=6-83"/>
</dbReference>
<dbReference type="PDB" id="8E7S">
    <property type="method" value="EM"/>
    <property type="resolution" value="3.20 A"/>
    <property type="chains" value="U/u=1-83"/>
</dbReference>
<dbReference type="PDB" id="8EC0">
    <property type="method" value="EM"/>
    <property type="resolution" value="3.30 A"/>
    <property type="chains" value="U=1-83"/>
</dbReference>
<dbReference type="PDB" id="9ETZ">
    <property type="method" value="EM"/>
    <property type="resolution" value="2.40 A"/>
    <property type="chains" value="j=7-81"/>
</dbReference>
<dbReference type="PDBsum" id="6GIQ"/>
<dbReference type="PDBsum" id="6HU9"/>
<dbReference type="PDBsum" id="6T0B"/>
<dbReference type="PDBsum" id="6T15"/>
<dbReference type="PDBsum" id="6YMX"/>
<dbReference type="PDBsum" id="6YMY"/>
<dbReference type="PDBsum" id="8E7S"/>
<dbReference type="PDBsum" id="8EC0"/>
<dbReference type="PDBsum" id="9ETZ"/>
<dbReference type="EMDB" id="EMD-10318"/>
<dbReference type="EMDB" id="EMD-10334"/>
<dbReference type="EMDB" id="EMD-10335"/>
<dbReference type="EMDB" id="EMD-10340"/>
<dbReference type="EMDB" id="EMD-10375"/>
<dbReference type="EMDB" id="EMD-10376"/>
<dbReference type="EMDB" id="EMD-10847"/>
<dbReference type="EMDB" id="EMD-10848"/>
<dbReference type="EMDB" id="EMD-19963"/>
<dbReference type="EMDB" id="EMD-27940"/>
<dbReference type="EMDB" id="EMD-28011"/>
<dbReference type="SMR" id="Q01519"/>
<dbReference type="BioGRID" id="31314">
    <property type="interactions" value="346"/>
</dbReference>
<dbReference type="ComplexPortal" id="CPX-1721">
    <property type="entry name" value="Mitochondrial respiratory chain complex IV, COX5A variant"/>
</dbReference>
<dbReference type="ComplexPortal" id="CPX-1722">
    <property type="entry name" value="Mitochondrial respiratory chain complex IV, COX5B variant"/>
</dbReference>
<dbReference type="DIP" id="DIP-4520N"/>
<dbReference type="FunCoup" id="Q01519">
    <property type="interactions" value="586"/>
</dbReference>
<dbReference type="IntAct" id="Q01519">
    <property type="interactions" value="41"/>
</dbReference>
<dbReference type="STRING" id="4932.YLR038C"/>
<dbReference type="TCDB" id="3.D.4.8.1">
    <property type="family name" value="the proton-translocating cytochrome oxidase (cox) superfamily"/>
</dbReference>
<dbReference type="iPTMnet" id="Q01519"/>
<dbReference type="PaxDb" id="4932-YLR038C"/>
<dbReference type="PeptideAtlas" id="Q01519"/>
<dbReference type="EnsemblFungi" id="YLR038C_mRNA">
    <property type="protein sequence ID" value="YLR038C"/>
    <property type="gene ID" value="YLR038C"/>
</dbReference>
<dbReference type="GeneID" id="850727"/>
<dbReference type="KEGG" id="sce:YLR038C"/>
<dbReference type="AGR" id="SGD:S000004028"/>
<dbReference type="SGD" id="S000004028">
    <property type="gene designation" value="COX12"/>
</dbReference>
<dbReference type="VEuPathDB" id="FungiDB:YLR038C"/>
<dbReference type="eggNOG" id="KOG3057">
    <property type="taxonomic scope" value="Eukaryota"/>
</dbReference>
<dbReference type="GeneTree" id="ENSGT00940000174930"/>
<dbReference type="HOGENOM" id="CLU_133964_2_0_1"/>
<dbReference type="InParanoid" id="Q01519"/>
<dbReference type="OMA" id="NEWIAKW"/>
<dbReference type="OrthoDB" id="1107506at2759"/>
<dbReference type="BioCyc" id="MetaCyc:YLR038C-MONOMER"/>
<dbReference type="BioCyc" id="YEAST:YLR038C-MONOMER"/>
<dbReference type="UniPathway" id="UPA00705"/>
<dbReference type="BioGRID-ORCS" id="850727">
    <property type="hits" value="7 hits in 10 CRISPR screens"/>
</dbReference>
<dbReference type="PRO" id="PR:Q01519"/>
<dbReference type="Proteomes" id="UP000002311">
    <property type="component" value="Chromosome XII"/>
</dbReference>
<dbReference type="RNAct" id="Q01519">
    <property type="molecule type" value="protein"/>
</dbReference>
<dbReference type="GO" id="GO:0005743">
    <property type="term" value="C:mitochondrial inner membrane"/>
    <property type="evidence" value="ECO:0007669"/>
    <property type="project" value="UniProtKB-SubCell"/>
</dbReference>
<dbReference type="GO" id="GO:0005758">
    <property type="term" value="C:mitochondrial intermembrane space"/>
    <property type="evidence" value="ECO:0000314"/>
    <property type="project" value="SGD"/>
</dbReference>
<dbReference type="GO" id="GO:0031966">
    <property type="term" value="C:mitochondrial membrane"/>
    <property type="evidence" value="ECO:0000314"/>
    <property type="project" value="ComplexPortal"/>
</dbReference>
<dbReference type="GO" id="GO:0005739">
    <property type="term" value="C:mitochondrion"/>
    <property type="evidence" value="ECO:0007005"/>
    <property type="project" value="SGD"/>
</dbReference>
<dbReference type="GO" id="GO:0045277">
    <property type="term" value="C:respiratory chain complex IV"/>
    <property type="evidence" value="ECO:0000314"/>
    <property type="project" value="SGD"/>
</dbReference>
<dbReference type="GO" id="GO:0016491">
    <property type="term" value="F:oxidoreductase activity"/>
    <property type="evidence" value="ECO:0007669"/>
    <property type="project" value="UniProtKB-KW"/>
</dbReference>
<dbReference type="GO" id="GO:0045333">
    <property type="term" value="P:cellular respiration"/>
    <property type="evidence" value="ECO:0000314"/>
    <property type="project" value="ComplexPortal"/>
</dbReference>
<dbReference type="GO" id="GO:0033617">
    <property type="term" value="P:mitochondrial cytochrome c oxidase assembly"/>
    <property type="evidence" value="ECO:0000315"/>
    <property type="project" value="SGD"/>
</dbReference>
<dbReference type="GO" id="GO:0006123">
    <property type="term" value="P:mitochondrial electron transport, cytochrome c to oxygen"/>
    <property type="evidence" value="ECO:0000314"/>
    <property type="project" value="ComplexPortal"/>
</dbReference>
<dbReference type="GO" id="GO:1902600">
    <property type="term" value="P:proton transmembrane transport"/>
    <property type="evidence" value="ECO:0007669"/>
    <property type="project" value="GOC"/>
</dbReference>
<dbReference type="CDD" id="cd00926">
    <property type="entry name" value="Cyt_c_Oxidase_VIb"/>
    <property type="match status" value="1"/>
</dbReference>
<dbReference type="FunFam" id="1.10.10.140:FF:000001">
    <property type="entry name" value="Cytochrome c oxidase subunit 6B1"/>
    <property type="match status" value="1"/>
</dbReference>
<dbReference type="Gene3D" id="1.10.10.140">
    <property type="entry name" value="Cytochrome c oxidase, subunit VIb"/>
    <property type="match status" value="1"/>
</dbReference>
<dbReference type="InterPro" id="IPR048280">
    <property type="entry name" value="COX6B-like"/>
</dbReference>
<dbReference type="InterPro" id="IPR036549">
    <property type="entry name" value="CX6/COA6-like_sf"/>
</dbReference>
<dbReference type="InterPro" id="IPR003213">
    <property type="entry name" value="Cyt_c_oxidase_su6B"/>
</dbReference>
<dbReference type="PANTHER" id="PTHR11387">
    <property type="entry name" value="CYTOCHROME C OXIDASE SUBUNIT 6B"/>
    <property type="match status" value="1"/>
</dbReference>
<dbReference type="Pfam" id="PF02297">
    <property type="entry name" value="COX6B"/>
    <property type="match status" value="1"/>
</dbReference>
<dbReference type="PIRSF" id="PIRSF000278">
    <property type="entry name" value="Cyt_c_oxidase_6B"/>
    <property type="match status" value="1"/>
</dbReference>
<dbReference type="SUPFAM" id="SSF47694">
    <property type="entry name" value="Cytochrome c oxidase subunit h"/>
    <property type="match status" value="1"/>
</dbReference>
<dbReference type="PROSITE" id="PS51808">
    <property type="entry name" value="CHCH"/>
    <property type="match status" value="1"/>
</dbReference>